<feature type="chain" id="PRO_0000066719" description="Insect toxin BsIT2">
    <location>
        <begin position="1"/>
        <end position="61"/>
    </location>
</feature>
<feature type="domain" description="LCN-type CS-alpha/beta" evidence="1">
    <location>
        <begin position="1"/>
        <end position="61"/>
    </location>
</feature>
<feature type="disulfide bond" evidence="1">
    <location>
        <begin position="10"/>
        <end position="60"/>
    </location>
</feature>
<feature type="disulfide bond" evidence="1">
    <location>
        <begin position="14"/>
        <end position="35"/>
    </location>
</feature>
<feature type="disulfide bond" evidence="1">
    <location>
        <begin position="21"/>
        <end position="42"/>
    </location>
</feature>
<feature type="disulfide bond" evidence="1">
    <location>
        <begin position="25"/>
        <end position="44"/>
    </location>
</feature>
<reference key="1">
    <citation type="journal article" date="2001" name="Arch. Biochem. Biophys.">
        <title>Purification, characterization, and primary structure of four depressant insect-selective neurotoxin analogs from scorpion (Buthus sindicus) venom.</title>
        <authorList>
            <person name="Ali S.A."/>
            <person name="Stoeva S."/>
            <person name="Grossmann J.G."/>
            <person name="Abbasi A."/>
            <person name="Voelter W."/>
        </authorList>
    </citation>
    <scope>PROTEIN SEQUENCE</scope>
    <scope>FUNCTION</scope>
    <scope>TOXIC DOSE</scope>
    <scope>MASS SPECTROMETRY</scope>
    <source>
        <tissue>Venom</tissue>
    </source>
</reference>
<name>SIX2_HOTTS</name>
<comment type="function">
    <text evidence="2">Depressant insect beta-toxins cause a transient contraction paralysis followed by a slow flaccid paralysis. They bind voltage-independently at site-4 of sodium channels (Nav) and shift the voltage of activation toward more negative potentials thereby affecting sodium channel activation and promoting spontaneous and repetitive firing. This toxin is active only on insects.</text>
</comment>
<comment type="subcellular location">
    <subcellularLocation>
        <location>Secreted</location>
    </subcellularLocation>
</comment>
<comment type="tissue specificity">
    <text>Expressed by the venom gland.</text>
</comment>
<comment type="domain">
    <text evidence="3">Has the structural arrangement of an alpha-helix connected to antiparallel beta-sheets by disulfide bonds (CS-alpha/beta).</text>
</comment>
<comment type="mass spectrometry"/>
<comment type="toxic dose">
    <text evidence="2">LD(50) is 160 ng/100 mg of body weight of cockroach (B.germanica) and 81 ng/100 mg of body weight of blowfly larvae (S.falculata).</text>
</comment>
<comment type="similarity">
    <text evidence="3">Belongs to the long (4 C-C) scorpion toxin superfamily. Sodium channel inhibitor family. Beta subfamily.</text>
</comment>
<evidence type="ECO:0000255" key="1">
    <source>
        <dbReference type="PROSITE-ProRule" id="PRU01210"/>
    </source>
</evidence>
<evidence type="ECO:0000269" key="2">
    <source>
    </source>
</evidence>
<evidence type="ECO:0000305" key="3"/>
<keyword id="KW-0903">Direct protein sequencing</keyword>
<keyword id="KW-1015">Disulfide bond</keyword>
<keyword id="KW-0872">Ion channel impairing toxin</keyword>
<keyword id="KW-0528">Neurotoxin</keyword>
<keyword id="KW-0964">Secreted</keyword>
<keyword id="KW-0800">Toxin</keyword>
<keyword id="KW-0738">Voltage-gated sodium channel impairing toxin</keyword>
<accession>P82812</accession>
<sequence>DGYIKKSKGCKVSCVINNVYCNSMCKSLGGSYGYCWTYGLACWCEGLPNAKRWKYETKTCK</sequence>
<protein>
    <recommendedName>
        <fullName>Insect toxin BsIT2</fullName>
        <shortName>Insect toxin 2</shortName>
    </recommendedName>
    <alternativeName>
        <fullName>Bs-dprIT2</fullName>
    </alternativeName>
</protein>
<organism>
    <name type="scientific">Hottentotta tamulus sindicus</name>
    <name type="common">Scorpion</name>
    <name type="synonym">Buthus sindicus</name>
    <dbReference type="NCBI Taxonomy" id="42519"/>
    <lineage>
        <taxon>Eukaryota</taxon>
        <taxon>Metazoa</taxon>
        <taxon>Ecdysozoa</taxon>
        <taxon>Arthropoda</taxon>
        <taxon>Chelicerata</taxon>
        <taxon>Arachnida</taxon>
        <taxon>Scorpiones</taxon>
        <taxon>Buthida</taxon>
        <taxon>Buthoidea</taxon>
        <taxon>Buthidae</taxon>
        <taxon>Mesobuthus</taxon>
    </lineage>
</organism>
<proteinExistence type="evidence at protein level"/>
<dbReference type="PIR" id="B59352">
    <property type="entry name" value="B59352"/>
</dbReference>
<dbReference type="SMR" id="P82812"/>
<dbReference type="GO" id="GO:0005576">
    <property type="term" value="C:extracellular region"/>
    <property type="evidence" value="ECO:0007669"/>
    <property type="project" value="UniProtKB-SubCell"/>
</dbReference>
<dbReference type="GO" id="GO:0019871">
    <property type="term" value="F:sodium channel inhibitor activity"/>
    <property type="evidence" value="ECO:0007669"/>
    <property type="project" value="InterPro"/>
</dbReference>
<dbReference type="GO" id="GO:0090729">
    <property type="term" value="F:toxin activity"/>
    <property type="evidence" value="ECO:0007669"/>
    <property type="project" value="UniProtKB-KW"/>
</dbReference>
<dbReference type="GO" id="GO:0006952">
    <property type="term" value="P:defense response"/>
    <property type="evidence" value="ECO:0007669"/>
    <property type="project" value="InterPro"/>
</dbReference>
<dbReference type="CDD" id="cd23106">
    <property type="entry name" value="neurotoxins_LC_scorpion"/>
    <property type="match status" value="1"/>
</dbReference>
<dbReference type="Gene3D" id="3.30.30.10">
    <property type="entry name" value="Knottin, scorpion toxin-like"/>
    <property type="match status" value="1"/>
</dbReference>
<dbReference type="InterPro" id="IPR044062">
    <property type="entry name" value="LCN-type_CS_alpha_beta_dom"/>
</dbReference>
<dbReference type="InterPro" id="IPR003614">
    <property type="entry name" value="Scorpion_toxin-like"/>
</dbReference>
<dbReference type="InterPro" id="IPR036574">
    <property type="entry name" value="Scorpion_toxin-like_sf"/>
</dbReference>
<dbReference type="InterPro" id="IPR018218">
    <property type="entry name" value="Scorpion_toxinL"/>
</dbReference>
<dbReference type="InterPro" id="IPR002061">
    <property type="entry name" value="Scorpion_toxinL/defensin"/>
</dbReference>
<dbReference type="Pfam" id="PF00537">
    <property type="entry name" value="Toxin_3"/>
    <property type="match status" value="1"/>
</dbReference>
<dbReference type="PRINTS" id="PR00285">
    <property type="entry name" value="SCORPNTOXIN"/>
</dbReference>
<dbReference type="SMART" id="SM00505">
    <property type="entry name" value="Knot1"/>
    <property type="match status" value="1"/>
</dbReference>
<dbReference type="SUPFAM" id="SSF57095">
    <property type="entry name" value="Scorpion toxin-like"/>
    <property type="match status" value="1"/>
</dbReference>
<dbReference type="PROSITE" id="PS51863">
    <property type="entry name" value="LCN_CSAB"/>
    <property type="match status" value="1"/>
</dbReference>